<keyword id="KW-0067">ATP-binding</keyword>
<keyword id="KW-0963">Cytoplasm</keyword>
<keyword id="KW-0436">Ligase</keyword>
<keyword id="KW-0547">Nucleotide-binding</keyword>
<keyword id="KW-0566">Pantothenate biosynthesis</keyword>
<keyword id="KW-1185">Reference proteome</keyword>
<evidence type="ECO:0000255" key="1">
    <source>
        <dbReference type="HAMAP-Rule" id="MF_00158"/>
    </source>
</evidence>
<organism>
    <name type="scientific">Chlorobaculum tepidum (strain ATCC 49652 / DSM 12025 / NBRC 103806 / TLS)</name>
    <name type="common">Chlorobium tepidum</name>
    <dbReference type="NCBI Taxonomy" id="194439"/>
    <lineage>
        <taxon>Bacteria</taxon>
        <taxon>Pseudomonadati</taxon>
        <taxon>Chlorobiota</taxon>
        <taxon>Chlorobiia</taxon>
        <taxon>Chlorobiales</taxon>
        <taxon>Chlorobiaceae</taxon>
        <taxon>Chlorobaculum</taxon>
    </lineage>
</organism>
<accession>Q8KBY5</accession>
<feature type="chain" id="PRO_0000128219" description="Pantothenate synthetase">
    <location>
        <begin position="1"/>
        <end position="284"/>
    </location>
</feature>
<feature type="active site" description="Proton donor" evidence="1">
    <location>
        <position position="37"/>
    </location>
</feature>
<feature type="binding site" evidence="1">
    <location>
        <begin position="30"/>
        <end position="37"/>
    </location>
    <ligand>
        <name>ATP</name>
        <dbReference type="ChEBI" id="CHEBI:30616"/>
    </ligand>
</feature>
<feature type="binding site" evidence="1">
    <location>
        <position position="61"/>
    </location>
    <ligand>
        <name>(R)-pantoate</name>
        <dbReference type="ChEBI" id="CHEBI:15980"/>
    </ligand>
</feature>
<feature type="binding site" evidence="1">
    <location>
        <position position="61"/>
    </location>
    <ligand>
        <name>beta-alanine</name>
        <dbReference type="ChEBI" id="CHEBI:57966"/>
    </ligand>
</feature>
<feature type="binding site" evidence="1">
    <location>
        <begin position="147"/>
        <end position="150"/>
    </location>
    <ligand>
        <name>ATP</name>
        <dbReference type="ChEBI" id="CHEBI:30616"/>
    </ligand>
</feature>
<feature type="binding site" evidence="1">
    <location>
        <position position="153"/>
    </location>
    <ligand>
        <name>(R)-pantoate</name>
        <dbReference type="ChEBI" id="CHEBI:15980"/>
    </ligand>
</feature>
<feature type="binding site" evidence="1">
    <location>
        <position position="176"/>
    </location>
    <ligand>
        <name>ATP</name>
        <dbReference type="ChEBI" id="CHEBI:30616"/>
    </ligand>
</feature>
<feature type="binding site" evidence="1">
    <location>
        <begin position="184"/>
        <end position="187"/>
    </location>
    <ligand>
        <name>ATP</name>
        <dbReference type="ChEBI" id="CHEBI:30616"/>
    </ligand>
</feature>
<proteinExistence type="inferred from homology"/>
<comment type="function">
    <text evidence="1">Catalyzes the condensation of pantoate with beta-alanine in an ATP-dependent reaction via a pantoyl-adenylate intermediate.</text>
</comment>
<comment type="catalytic activity">
    <reaction evidence="1">
        <text>(R)-pantoate + beta-alanine + ATP = (R)-pantothenate + AMP + diphosphate + H(+)</text>
        <dbReference type="Rhea" id="RHEA:10912"/>
        <dbReference type="ChEBI" id="CHEBI:15378"/>
        <dbReference type="ChEBI" id="CHEBI:15980"/>
        <dbReference type="ChEBI" id="CHEBI:29032"/>
        <dbReference type="ChEBI" id="CHEBI:30616"/>
        <dbReference type="ChEBI" id="CHEBI:33019"/>
        <dbReference type="ChEBI" id="CHEBI:57966"/>
        <dbReference type="ChEBI" id="CHEBI:456215"/>
        <dbReference type="EC" id="6.3.2.1"/>
    </reaction>
</comment>
<comment type="pathway">
    <text evidence="1">Cofactor biosynthesis; (R)-pantothenate biosynthesis; (R)-pantothenate from (R)-pantoate and beta-alanine: step 1/1.</text>
</comment>
<comment type="subunit">
    <text evidence="1">Homodimer.</text>
</comment>
<comment type="subcellular location">
    <subcellularLocation>
        <location evidence="1">Cytoplasm</location>
    </subcellularLocation>
</comment>
<comment type="miscellaneous">
    <text evidence="1">The reaction proceeds by a bi uni uni bi ping pong mechanism.</text>
</comment>
<comment type="similarity">
    <text evidence="1">Belongs to the pantothenate synthetase family.</text>
</comment>
<reference key="1">
    <citation type="journal article" date="2002" name="Proc. Natl. Acad. Sci. U.S.A.">
        <title>The complete genome sequence of Chlorobium tepidum TLS, a photosynthetic, anaerobic, green-sulfur bacterium.</title>
        <authorList>
            <person name="Eisen J.A."/>
            <person name="Nelson K.E."/>
            <person name="Paulsen I.T."/>
            <person name="Heidelberg J.F."/>
            <person name="Wu M."/>
            <person name="Dodson R.J."/>
            <person name="DeBoy R.T."/>
            <person name="Gwinn M.L."/>
            <person name="Nelson W.C."/>
            <person name="Haft D.H."/>
            <person name="Hickey E.K."/>
            <person name="Peterson J.D."/>
            <person name="Durkin A.S."/>
            <person name="Kolonay J.F."/>
            <person name="Yang F."/>
            <person name="Holt I.E."/>
            <person name="Umayam L.A."/>
            <person name="Mason T.M."/>
            <person name="Brenner M."/>
            <person name="Shea T.P."/>
            <person name="Parksey D.S."/>
            <person name="Nierman W.C."/>
            <person name="Feldblyum T.V."/>
            <person name="Hansen C.L."/>
            <person name="Craven M.B."/>
            <person name="Radune D."/>
            <person name="Vamathevan J.J."/>
            <person name="Khouri H.M."/>
            <person name="White O."/>
            <person name="Gruber T.M."/>
            <person name="Ketchum K.A."/>
            <person name="Venter J.C."/>
            <person name="Tettelin H."/>
            <person name="Bryant D.A."/>
            <person name="Fraser C.M."/>
        </authorList>
    </citation>
    <scope>NUCLEOTIDE SEQUENCE [LARGE SCALE GENOMIC DNA]</scope>
    <source>
        <strain>ATCC 49652 / DSM 12025 / NBRC 103806 / TLS</strain>
    </source>
</reference>
<protein>
    <recommendedName>
        <fullName evidence="1">Pantothenate synthetase</fullName>
        <shortName evidence="1">PS</shortName>
        <ecNumber evidence="1">6.3.2.1</ecNumber>
    </recommendedName>
    <alternativeName>
        <fullName evidence="1">Pantoate--beta-alanine ligase</fullName>
    </alternativeName>
    <alternativeName>
        <fullName evidence="1">Pantoate-activating enzyme</fullName>
    </alternativeName>
</protein>
<dbReference type="EC" id="6.3.2.1" evidence="1"/>
<dbReference type="EMBL" id="AE006470">
    <property type="protein sequence ID" value="AAM72872.1"/>
    <property type="molecule type" value="Genomic_DNA"/>
</dbReference>
<dbReference type="RefSeq" id="NP_662530.1">
    <property type="nucleotide sequence ID" value="NC_002932.3"/>
</dbReference>
<dbReference type="RefSeq" id="WP_010933311.1">
    <property type="nucleotide sequence ID" value="NC_002932.3"/>
</dbReference>
<dbReference type="SMR" id="Q8KBY5"/>
<dbReference type="STRING" id="194439.CT1647"/>
<dbReference type="EnsemblBacteria" id="AAM72872">
    <property type="protein sequence ID" value="AAM72872"/>
    <property type="gene ID" value="CT1647"/>
</dbReference>
<dbReference type="KEGG" id="cte:CT1647"/>
<dbReference type="PATRIC" id="fig|194439.7.peg.1490"/>
<dbReference type="eggNOG" id="COG0414">
    <property type="taxonomic scope" value="Bacteria"/>
</dbReference>
<dbReference type="HOGENOM" id="CLU_047148_0_0_10"/>
<dbReference type="OrthoDB" id="9773087at2"/>
<dbReference type="UniPathway" id="UPA00028">
    <property type="reaction ID" value="UER00005"/>
</dbReference>
<dbReference type="Proteomes" id="UP000001007">
    <property type="component" value="Chromosome"/>
</dbReference>
<dbReference type="GO" id="GO:0005829">
    <property type="term" value="C:cytosol"/>
    <property type="evidence" value="ECO:0007669"/>
    <property type="project" value="TreeGrafter"/>
</dbReference>
<dbReference type="GO" id="GO:0005524">
    <property type="term" value="F:ATP binding"/>
    <property type="evidence" value="ECO:0007669"/>
    <property type="project" value="UniProtKB-KW"/>
</dbReference>
<dbReference type="GO" id="GO:0004592">
    <property type="term" value="F:pantoate-beta-alanine ligase activity"/>
    <property type="evidence" value="ECO:0007669"/>
    <property type="project" value="UniProtKB-UniRule"/>
</dbReference>
<dbReference type="GO" id="GO:0015940">
    <property type="term" value="P:pantothenate biosynthetic process"/>
    <property type="evidence" value="ECO:0007669"/>
    <property type="project" value="UniProtKB-UniRule"/>
</dbReference>
<dbReference type="CDD" id="cd00560">
    <property type="entry name" value="PanC"/>
    <property type="match status" value="1"/>
</dbReference>
<dbReference type="FunFam" id="3.40.50.620:FF:000114">
    <property type="entry name" value="Pantothenate synthetase"/>
    <property type="match status" value="1"/>
</dbReference>
<dbReference type="Gene3D" id="3.40.50.620">
    <property type="entry name" value="HUPs"/>
    <property type="match status" value="1"/>
</dbReference>
<dbReference type="Gene3D" id="3.30.1300.10">
    <property type="entry name" value="Pantoate-beta-alanine ligase, C-terminal domain"/>
    <property type="match status" value="1"/>
</dbReference>
<dbReference type="HAMAP" id="MF_00158">
    <property type="entry name" value="PanC"/>
    <property type="match status" value="1"/>
</dbReference>
<dbReference type="InterPro" id="IPR004821">
    <property type="entry name" value="Cyt_trans-like"/>
</dbReference>
<dbReference type="InterPro" id="IPR003721">
    <property type="entry name" value="Pantoate_ligase"/>
</dbReference>
<dbReference type="InterPro" id="IPR042176">
    <property type="entry name" value="Pantoate_ligase_C"/>
</dbReference>
<dbReference type="InterPro" id="IPR014729">
    <property type="entry name" value="Rossmann-like_a/b/a_fold"/>
</dbReference>
<dbReference type="NCBIfam" id="TIGR00125">
    <property type="entry name" value="cyt_tran_rel"/>
    <property type="match status" value="1"/>
</dbReference>
<dbReference type="NCBIfam" id="TIGR00018">
    <property type="entry name" value="panC"/>
    <property type="match status" value="1"/>
</dbReference>
<dbReference type="PANTHER" id="PTHR21299">
    <property type="entry name" value="CYTIDYLATE KINASE/PANTOATE-BETA-ALANINE LIGASE"/>
    <property type="match status" value="1"/>
</dbReference>
<dbReference type="PANTHER" id="PTHR21299:SF1">
    <property type="entry name" value="PANTOATE--BETA-ALANINE LIGASE"/>
    <property type="match status" value="1"/>
</dbReference>
<dbReference type="Pfam" id="PF02569">
    <property type="entry name" value="Pantoate_ligase"/>
    <property type="match status" value="1"/>
</dbReference>
<dbReference type="SUPFAM" id="SSF52374">
    <property type="entry name" value="Nucleotidylyl transferase"/>
    <property type="match status" value="1"/>
</dbReference>
<sequence length="284" mass="31471">MQIINDPAEMQKIAEKLRLQHQYIGVVMTMGALHEGHLSLVKLAKAHAGTVIMTIFVNPTQFGPNEDFYRYPRPFEQDAALARSAGVDYLFAPSTEAMYPDGYSTSIDPGPIATRFEGASRPGHFGGMVTVVVKLLGITRPHLAVFGEKDAQQLAIIRRVVTDLNIGTTILGAPIVRESDGLATSSRNIYLSSNERQQATVLYRAIRYAKMEIDKDRTDLEAIAGEAEALVRSEPDAEPDYLCFVDDATFEPVTQAVTGKAYRLIMAVRIGSTRLIDNWRFDYQ</sequence>
<name>PANC_CHLTE</name>
<gene>
    <name evidence="1" type="primary">panC</name>
    <name type="ordered locus">CT1647</name>
</gene>